<name>EUTC_SALPA</name>
<evidence type="ECO:0000255" key="1">
    <source>
        <dbReference type="HAMAP-Rule" id="MF_00601"/>
    </source>
</evidence>
<evidence type="ECO:0000256" key="2">
    <source>
        <dbReference type="SAM" id="MobiDB-lite"/>
    </source>
</evidence>
<keyword id="KW-1283">Bacterial microcompartment</keyword>
<keyword id="KW-0846">Cobalamin</keyword>
<keyword id="KW-0170">Cobalt</keyword>
<keyword id="KW-0456">Lyase</keyword>
<feature type="chain" id="PRO_1000025864" description="Ethanolamine ammonia-lyase small subunit">
    <location>
        <begin position="1"/>
        <end position="298"/>
    </location>
</feature>
<feature type="region of interest" description="Disordered" evidence="2">
    <location>
        <begin position="17"/>
        <end position="37"/>
    </location>
</feature>
<feature type="binding site" evidence="1">
    <location>
        <position position="210"/>
    </location>
    <ligand>
        <name>adenosylcob(III)alamin</name>
        <dbReference type="ChEBI" id="CHEBI:18408"/>
    </ligand>
</feature>
<feature type="binding site" evidence="1">
    <location>
        <position position="231"/>
    </location>
    <ligand>
        <name>adenosylcob(III)alamin</name>
        <dbReference type="ChEBI" id="CHEBI:18408"/>
    </ligand>
</feature>
<feature type="binding site" evidence="1">
    <location>
        <position position="261"/>
    </location>
    <ligand>
        <name>adenosylcob(III)alamin</name>
        <dbReference type="ChEBI" id="CHEBI:18408"/>
    </ligand>
</feature>
<gene>
    <name evidence="1" type="primary">eutC</name>
    <name type="ordered locus">SPA0411</name>
</gene>
<dbReference type="EC" id="4.3.1.7" evidence="1"/>
<dbReference type="EMBL" id="CP000026">
    <property type="protein sequence ID" value="AAV76422.1"/>
    <property type="molecule type" value="Genomic_DNA"/>
</dbReference>
<dbReference type="RefSeq" id="WP_000372342.1">
    <property type="nucleotide sequence ID" value="NC_006511.1"/>
</dbReference>
<dbReference type="SMR" id="Q5PI32"/>
<dbReference type="KEGG" id="spt:SPA0411"/>
<dbReference type="HOGENOM" id="CLU_068224_2_0_6"/>
<dbReference type="UniPathway" id="UPA00560"/>
<dbReference type="Proteomes" id="UP000008185">
    <property type="component" value="Chromosome"/>
</dbReference>
<dbReference type="GO" id="GO:0009350">
    <property type="term" value="C:ethanolamine ammonia-lyase complex"/>
    <property type="evidence" value="ECO:0007669"/>
    <property type="project" value="UniProtKB-UniRule"/>
</dbReference>
<dbReference type="GO" id="GO:0031471">
    <property type="term" value="C:ethanolamine degradation polyhedral organelle"/>
    <property type="evidence" value="ECO:0007669"/>
    <property type="project" value="UniProtKB-UniRule"/>
</dbReference>
<dbReference type="GO" id="GO:0031419">
    <property type="term" value="F:cobalamin binding"/>
    <property type="evidence" value="ECO:0007669"/>
    <property type="project" value="UniProtKB-UniRule"/>
</dbReference>
<dbReference type="GO" id="GO:0008851">
    <property type="term" value="F:ethanolamine ammonia-lyase activity"/>
    <property type="evidence" value="ECO:0007669"/>
    <property type="project" value="UniProtKB-UniRule"/>
</dbReference>
<dbReference type="GO" id="GO:0006520">
    <property type="term" value="P:amino acid metabolic process"/>
    <property type="evidence" value="ECO:0007669"/>
    <property type="project" value="InterPro"/>
</dbReference>
<dbReference type="GO" id="GO:0046336">
    <property type="term" value="P:ethanolamine catabolic process"/>
    <property type="evidence" value="ECO:0007669"/>
    <property type="project" value="UniProtKB-UniRule"/>
</dbReference>
<dbReference type="FunFam" id="3.40.50.11240:FF:000001">
    <property type="entry name" value="Ethanolamine ammonia-lyase light chain"/>
    <property type="match status" value="1"/>
</dbReference>
<dbReference type="Gene3D" id="6.10.140.690">
    <property type="match status" value="1"/>
</dbReference>
<dbReference type="Gene3D" id="6.10.250.2060">
    <property type="match status" value="1"/>
</dbReference>
<dbReference type="Gene3D" id="3.40.50.11240">
    <property type="entry name" value="Ethanolamine ammonia-lyase light chain (EutC)"/>
    <property type="match status" value="1"/>
</dbReference>
<dbReference type="HAMAP" id="MF_00601">
    <property type="entry name" value="EutC"/>
    <property type="match status" value="1"/>
</dbReference>
<dbReference type="InterPro" id="IPR009246">
    <property type="entry name" value="EutC"/>
</dbReference>
<dbReference type="InterPro" id="IPR042251">
    <property type="entry name" value="EutC_C"/>
</dbReference>
<dbReference type="NCBIfam" id="NF003971">
    <property type="entry name" value="PRK05465.1"/>
    <property type="match status" value="1"/>
</dbReference>
<dbReference type="PANTHER" id="PTHR39330">
    <property type="entry name" value="ETHANOLAMINE AMMONIA-LYASE LIGHT CHAIN"/>
    <property type="match status" value="1"/>
</dbReference>
<dbReference type="PANTHER" id="PTHR39330:SF1">
    <property type="entry name" value="ETHANOLAMINE AMMONIA-LYASE SMALL SUBUNIT"/>
    <property type="match status" value="1"/>
</dbReference>
<dbReference type="Pfam" id="PF05985">
    <property type="entry name" value="EutC"/>
    <property type="match status" value="1"/>
</dbReference>
<dbReference type="PIRSF" id="PIRSF018982">
    <property type="entry name" value="EutC"/>
    <property type="match status" value="1"/>
</dbReference>
<organism>
    <name type="scientific">Salmonella paratyphi A (strain ATCC 9150 / SARB42)</name>
    <dbReference type="NCBI Taxonomy" id="295319"/>
    <lineage>
        <taxon>Bacteria</taxon>
        <taxon>Pseudomonadati</taxon>
        <taxon>Pseudomonadota</taxon>
        <taxon>Gammaproteobacteria</taxon>
        <taxon>Enterobacterales</taxon>
        <taxon>Enterobacteriaceae</taxon>
        <taxon>Salmonella</taxon>
    </lineage>
</organism>
<reference key="1">
    <citation type="journal article" date="2004" name="Nat. Genet.">
        <title>Comparison of genome degradation in Paratyphi A and Typhi, human-restricted serovars of Salmonella enterica that cause typhoid.</title>
        <authorList>
            <person name="McClelland M."/>
            <person name="Sanderson K.E."/>
            <person name="Clifton S.W."/>
            <person name="Latreille P."/>
            <person name="Porwollik S."/>
            <person name="Sabo A."/>
            <person name="Meyer R."/>
            <person name="Bieri T."/>
            <person name="Ozersky P."/>
            <person name="McLellan M."/>
            <person name="Harkins C.R."/>
            <person name="Wang C."/>
            <person name="Nguyen C."/>
            <person name="Berghoff A."/>
            <person name="Elliott G."/>
            <person name="Kohlberg S."/>
            <person name="Strong C."/>
            <person name="Du F."/>
            <person name="Carter J."/>
            <person name="Kremizki C."/>
            <person name="Layman D."/>
            <person name="Leonard S."/>
            <person name="Sun H."/>
            <person name="Fulton L."/>
            <person name="Nash W."/>
            <person name="Miner T."/>
            <person name="Minx P."/>
            <person name="Delehaunty K."/>
            <person name="Fronick C."/>
            <person name="Magrini V."/>
            <person name="Nhan M."/>
            <person name="Warren W."/>
            <person name="Florea L."/>
            <person name="Spieth J."/>
            <person name="Wilson R.K."/>
        </authorList>
    </citation>
    <scope>NUCLEOTIDE SEQUENCE [LARGE SCALE GENOMIC DNA]</scope>
    <source>
        <strain>ATCC 9150 / SARB42</strain>
    </source>
</reference>
<accession>Q5PI32</accession>
<proteinExistence type="inferred from homology"/>
<comment type="function">
    <text evidence="1">Catalyzes the deamination of various vicinal amino-alcohols to oxo compounds. Allows this organism to utilize ethanolamine as the sole source of nitrogen and carbon in the presence of external vitamin B12.</text>
</comment>
<comment type="catalytic activity">
    <reaction evidence="1">
        <text>ethanolamine = acetaldehyde + NH4(+)</text>
        <dbReference type="Rhea" id="RHEA:15313"/>
        <dbReference type="ChEBI" id="CHEBI:15343"/>
        <dbReference type="ChEBI" id="CHEBI:28938"/>
        <dbReference type="ChEBI" id="CHEBI:57603"/>
        <dbReference type="EC" id="4.3.1.7"/>
    </reaction>
</comment>
<comment type="cofactor">
    <cofactor evidence="1">
        <name>adenosylcob(III)alamin</name>
        <dbReference type="ChEBI" id="CHEBI:18408"/>
    </cofactor>
    <text evidence="1">Binds between the large and small subunits.</text>
</comment>
<comment type="pathway">
    <text evidence="1">Amine and polyamine degradation; ethanolamine degradation.</text>
</comment>
<comment type="subunit">
    <text evidence="1">The basic unit is a heterodimer which dimerizes to form tetramers. The heterotetramers trimerize; 6 large subunits form a core ring with 6 small subunits projecting outwards.</text>
</comment>
<comment type="subcellular location">
    <subcellularLocation>
        <location evidence="1">Bacterial microcompartment</location>
    </subcellularLocation>
</comment>
<comment type="similarity">
    <text evidence="1">Belongs to the EutC family.</text>
</comment>
<protein>
    <recommendedName>
        <fullName evidence="1">Ethanolamine ammonia-lyase small subunit</fullName>
        <shortName evidence="1">EAL small subunit</shortName>
        <ecNumber evidence="1">4.3.1.7</ecNumber>
    </recommendedName>
</protein>
<sequence length="298" mass="32208">MDQKQIEEIVRSVMASMGQDVPQPVAPSKQEGAKPQCASPTVTESCALDLGSAEAKAWIGVENPHRADVLTELRRSTAARVCTGRAGPRPRTQALLRFLADHSRSKDTVLKEVPEEWVKAQGLLEVRSEISDKNLYLTRPDMGRRLSPEAIDALKSQCVMNPDVQVVVSDGLSTDAITANYEEILPPLLAGLKQAGLNVGTPFFVRYGRVKIEDQIGEILGAKVVILLVGERPGLGQSESLSCYAVYSPRVATTVEADRTCISNIHQGGTPPVEAAAVIVDLAKRMLEQKASGINMTR</sequence>